<name>RS4_NITSB</name>
<comment type="function">
    <text evidence="1">One of the primary rRNA binding proteins, it binds directly to 16S rRNA where it nucleates assembly of the body of the 30S subunit.</text>
</comment>
<comment type="function">
    <text evidence="1">With S5 and S12 plays an important role in translational accuracy.</text>
</comment>
<comment type="subunit">
    <text evidence="1">Part of the 30S ribosomal subunit. Contacts protein S5. The interaction surface between S4 and S5 is involved in control of translational fidelity.</text>
</comment>
<comment type="similarity">
    <text evidence="1">Belongs to the universal ribosomal protein uS4 family.</text>
</comment>
<organism>
    <name type="scientific">Nitratiruptor sp. (strain SB155-2)</name>
    <dbReference type="NCBI Taxonomy" id="387092"/>
    <lineage>
        <taxon>Bacteria</taxon>
        <taxon>Pseudomonadati</taxon>
        <taxon>Campylobacterota</taxon>
        <taxon>Epsilonproteobacteria</taxon>
        <taxon>Nautiliales</taxon>
        <taxon>Nitratiruptoraceae</taxon>
        <taxon>Nitratiruptor</taxon>
    </lineage>
</organism>
<protein>
    <recommendedName>
        <fullName evidence="1">Small ribosomal subunit protein uS4</fullName>
    </recommendedName>
    <alternativeName>
        <fullName evidence="3">30S ribosomal protein S4</fullName>
    </alternativeName>
</protein>
<dbReference type="EMBL" id="AP009178">
    <property type="protein sequence ID" value="BAF69362.1"/>
    <property type="molecule type" value="Genomic_DNA"/>
</dbReference>
<dbReference type="RefSeq" id="WP_012081625.1">
    <property type="nucleotide sequence ID" value="NC_009662.1"/>
</dbReference>
<dbReference type="SMR" id="A6Q1K3"/>
<dbReference type="FunCoup" id="A6Q1K3">
    <property type="interactions" value="567"/>
</dbReference>
<dbReference type="STRING" id="387092.NIS_0248"/>
<dbReference type="KEGG" id="nis:NIS_0248"/>
<dbReference type="eggNOG" id="COG0522">
    <property type="taxonomic scope" value="Bacteria"/>
</dbReference>
<dbReference type="HOGENOM" id="CLU_092403_0_2_7"/>
<dbReference type="InParanoid" id="A6Q1K3"/>
<dbReference type="OrthoDB" id="9803672at2"/>
<dbReference type="Proteomes" id="UP000001118">
    <property type="component" value="Chromosome"/>
</dbReference>
<dbReference type="GO" id="GO:0015935">
    <property type="term" value="C:small ribosomal subunit"/>
    <property type="evidence" value="ECO:0007669"/>
    <property type="project" value="InterPro"/>
</dbReference>
<dbReference type="GO" id="GO:0019843">
    <property type="term" value="F:rRNA binding"/>
    <property type="evidence" value="ECO:0007669"/>
    <property type="project" value="UniProtKB-UniRule"/>
</dbReference>
<dbReference type="GO" id="GO:0003735">
    <property type="term" value="F:structural constituent of ribosome"/>
    <property type="evidence" value="ECO:0007669"/>
    <property type="project" value="InterPro"/>
</dbReference>
<dbReference type="GO" id="GO:0042274">
    <property type="term" value="P:ribosomal small subunit biogenesis"/>
    <property type="evidence" value="ECO:0007669"/>
    <property type="project" value="TreeGrafter"/>
</dbReference>
<dbReference type="GO" id="GO:0006412">
    <property type="term" value="P:translation"/>
    <property type="evidence" value="ECO:0007669"/>
    <property type="project" value="UniProtKB-UniRule"/>
</dbReference>
<dbReference type="CDD" id="cd00165">
    <property type="entry name" value="S4"/>
    <property type="match status" value="1"/>
</dbReference>
<dbReference type="FunFam" id="1.10.1050.10:FF:000001">
    <property type="entry name" value="30S ribosomal protein S4"/>
    <property type="match status" value="1"/>
</dbReference>
<dbReference type="FunFam" id="3.10.290.10:FF:000001">
    <property type="entry name" value="30S ribosomal protein S4"/>
    <property type="match status" value="1"/>
</dbReference>
<dbReference type="Gene3D" id="1.10.1050.10">
    <property type="entry name" value="Ribosomal Protein S4 Delta 41, Chain A, domain 1"/>
    <property type="match status" value="1"/>
</dbReference>
<dbReference type="Gene3D" id="3.10.290.10">
    <property type="entry name" value="RNA-binding S4 domain"/>
    <property type="match status" value="1"/>
</dbReference>
<dbReference type="HAMAP" id="MF_01306_B">
    <property type="entry name" value="Ribosomal_uS4_B"/>
    <property type="match status" value="1"/>
</dbReference>
<dbReference type="InterPro" id="IPR022801">
    <property type="entry name" value="Ribosomal_uS4"/>
</dbReference>
<dbReference type="InterPro" id="IPR005709">
    <property type="entry name" value="Ribosomal_uS4_bac-type"/>
</dbReference>
<dbReference type="InterPro" id="IPR018079">
    <property type="entry name" value="Ribosomal_uS4_CS"/>
</dbReference>
<dbReference type="InterPro" id="IPR001912">
    <property type="entry name" value="Ribosomal_uS4_N"/>
</dbReference>
<dbReference type="InterPro" id="IPR002942">
    <property type="entry name" value="S4_RNA-bd"/>
</dbReference>
<dbReference type="InterPro" id="IPR036986">
    <property type="entry name" value="S4_RNA-bd_sf"/>
</dbReference>
<dbReference type="NCBIfam" id="NF003717">
    <property type="entry name" value="PRK05327.1"/>
    <property type="match status" value="1"/>
</dbReference>
<dbReference type="NCBIfam" id="TIGR01017">
    <property type="entry name" value="rpsD_bact"/>
    <property type="match status" value="1"/>
</dbReference>
<dbReference type="PANTHER" id="PTHR11831">
    <property type="entry name" value="30S 40S RIBOSOMAL PROTEIN"/>
    <property type="match status" value="1"/>
</dbReference>
<dbReference type="PANTHER" id="PTHR11831:SF4">
    <property type="entry name" value="SMALL RIBOSOMAL SUBUNIT PROTEIN US4M"/>
    <property type="match status" value="1"/>
</dbReference>
<dbReference type="Pfam" id="PF00163">
    <property type="entry name" value="Ribosomal_S4"/>
    <property type="match status" value="1"/>
</dbReference>
<dbReference type="Pfam" id="PF01479">
    <property type="entry name" value="S4"/>
    <property type="match status" value="1"/>
</dbReference>
<dbReference type="SMART" id="SM01390">
    <property type="entry name" value="Ribosomal_S4"/>
    <property type="match status" value="1"/>
</dbReference>
<dbReference type="SMART" id="SM00363">
    <property type="entry name" value="S4"/>
    <property type="match status" value="1"/>
</dbReference>
<dbReference type="SUPFAM" id="SSF55174">
    <property type="entry name" value="Alpha-L RNA-binding motif"/>
    <property type="match status" value="1"/>
</dbReference>
<dbReference type="PROSITE" id="PS00632">
    <property type="entry name" value="RIBOSOMAL_S4"/>
    <property type="match status" value="1"/>
</dbReference>
<dbReference type="PROSITE" id="PS50889">
    <property type="entry name" value="S4"/>
    <property type="match status" value="1"/>
</dbReference>
<proteinExistence type="inferred from homology"/>
<feature type="chain" id="PRO_0000322313" description="Small ribosomal subunit protein uS4">
    <location>
        <begin position="1"/>
        <end position="208"/>
    </location>
</feature>
<feature type="domain" description="S4 RNA-binding" evidence="1">
    <location>
        <begin position="98"/>
        <end position="161"/>
    </location>
</feature>
<feature type="region of interest" description="Disordered" evidence="2">
    <location>
        <begin position="30"/>
        <end position="49"/>
    </location>
</feature>
<keyword id="KW-1185">Reference proteome</keyword>
<keyword id="KW-0687">Ribonucleoprotein</keyword>
<keyword id="KW-0689">Ribosomal protein</keyword>
<keyword id="KW-0694">RNA-binding</keyword>
<keyword id="KW-0699">rRNA-binding</keyword>
<accession>A6Q1K3</accession>
<gene>
    <name evidence="1" type="primary">rpsD</name>
    <name type="ordered locus">NIS_0248</name>
</gene>
<sequence>MARYRGPVEKIERRLGVSLALKGERRLAGKSALEKRPYPPGQHGQRRSKISEYGLQLREKQKAKFMYGVAEKQFRNLFKEANRMEGNTGENLIKLLERRLDNVVYRMGFATTRRFARQLVNHGHVLVDGKRVNIPSFRVKPGQKIEIREKSKNNPQIQRSLELTNQTGIVPWVDVDKEKVFGIFTRIPEREEIDIPVEERLIVELYSK</sequence>
<evidence type="ECO:0000255" key="1">
    <source>
        <dbReference type="HAMAP-Rule" id="MF_01306"/>
    </source>
</evidence>
<evidence type="ECO:0000256" key="2">
    <source>
        <dbReference type="SAM" id="MobiDB-lite"/>
    </source>
</evidence>
<evidence type="ECO:0000305" key="3"/>
<reference key="1">
    <citation type="journal article" date="2007" name="Proc. Natl. Acad. Sci. U.S.A.">
        <title>Deep-sea vent epsilon-proteobacterial genomes provide insights into emergence of pathogens.</title>
        <authorList>
            <person name="Nakagawa S."/>
            <person name="Takaki Y."/>
            <person name="Shimamura S."/>
            <person name="Reysenbach A.-L."/>
            <person name="Takai K."/>
            <person name="Horikoshi K."/>
        </authorList>
    </citation>
    <scope>NUCLEOTIDE SEQUENCE [LARGE SCALE GENOMIC DNA]</scope>
    <source>
        <strain>SB155-2</strain>
    </source>
</reference>